<evidence type="ECO:0000250" key="1"/>
<evidence type="ECO:0000250" key="2">
    <source>
        <dbReference type="UniProtKB" id="Q96FZ7"/>
    </source>
</evidence>
<evidence type="ECO:0000255" key="3"/>
<evidence type="ECO:0000256" key="4">
    <source>
        <dbReference type="SAM" id="MobiDB-lite"/>
    </source>
</evidence>
<evidence type="ECO:0000269" key="5">
    <source>
    </source>
</evidence>
<evidence type="ECO:0000305" key="6"/>
<gene>
    <name type="primary">VPS20.2</name>
    <name type="synonym">CHMP6-2</name>
    <name type="ordered locus">At5g09260</name>
    <name type="ORF">T2K12.4</name>
    <name type="ORF">T5E8.60</name>
</gene>
<dbReference type="EMBL" id="AL391712">
    <property type="protein sequence ID" value="CAC05452.1"/>
    <property type="molecule type" value="Genomic_DNA"/>
</dbReference>
<dbReference type="EMBL" id="CP002688">
    <property type="protein sequence ID" value="AED91366.1"/>
    <property type="molecule type" value="Genomic_DNA"/>
</dbReference>
<dbReference type="EMBL" id="BT010522">
    <property type="protein sequence ID" value="AAQ65145.1"/>
    <property type="molecule type" value="mRNA"/>
</dbReference>
<dbReference type="EMBL" id="AK175654">
    <property type="protein sequence ID" value="BAD43417.1"/>
    <property type="molecule type" value="mRNA"/>
</dbReference>
<dbReference type="RefSeq" id="NP_196488.1">
    <property type="nucleotide sequence ID" value="NM_120962.3"/>
</dbReference>
<dbReference type="SMR" id="Q9FY89"/>
<dbReference type="BioGRID" id="16063">
    <property type="interactions" value="10"/>
</dbReference>
<dbReference type="DIP" id="DIP-61573N"/>
<dbReference type="FunCoup" id="Q9FY89">
    <property type="interactions" value="3781"/>
</dbReference>
<dbReference type="IntAct" id="Q9FY89">
    <property type="interactions" value="9"/>
</dbReference>
<dbReference type="STRING" id="3702.Q9FY89"/>
<dbReference type="TCDB" id="3.A.31.1.2">
    <property type="family name" value="the endosomal sorting complexes required for transport iii (escrt-iii) family"/>
</dbReference>
<dbReference type="iPTMnet" id="Q9FY89"/>
<dbReference type="PaxDb" id="3702-AT5G09260.1"/>
<dbReference type="ProteomicsDB" id="242666"/>
<dbReference type="EnsemblPlants" id="AT5G09260.1">
    <property type="protein sequence ID" value="AT5G09260.1"/>
    <property type="gene ID" value="AT5G09260"/>
</dbReference>
<dbReference type="GeneID" id="830785"/>
<dbReference type="Gramene" id="AT5G09260.1">
    <property type="protein sequence ID" value="AT5G09260.1"/>
    <property type="gene ID" value="AT5G09260"/>
</dbReference>
<dbReference type="KEGG" id="ath:AT5G09260"/>
<dbReference type="Araport" id="AT5G09260"/>
<dbReference type="TAIR" id="AT5G09260">
    <property type="gene designation" value="VPS20.2"/>
</dbReference>
<dbReference type="eggNOG" id="KOG2910">
    <property type="taxonomic scope" value="Eukaryota"/>
</dbReference>
<dbReference type="HOGENOM" id="CLU_086201_1_0_1"/>
<dbReference type="InParanoid" id="Q9FY89"/>
<dbReference type="OMA" id="RAKQPAM"/>
<dbReference type="OrthoDB" id="441172at2759"/>
<dbReference type="PhylomeDB" id="Q9FY89"/>
<dbReference type="PRO" id="PR:Q9FY89"/>
<dbReference type="Proteomes" id="UP000006548">
    <property type="component" value="Chromosome 5"/>
</dbReference>
<dbReference type="ExpressionAtlas" id="Q9FY89">
    <property type="expression patterns" value="baseline and differential"/>
</dbReference>
<dbReference type="GO" id="GO:0005829">
    <property type="term" value="C:cytosol"/>
    <property type="evidence" value="ECO:0000314"/>
    <property type="project" value="TAIR"/>
</dbReference>
<dbReference type="GO" id="GO:0000815">
    <property type="term" value="C:ESCRT III complex"/>
    <property type="evidence" value="ECO:0000250"/>
    <property type="project" value="TAIR"/>
</dbReference>
<dbReference type="GO" id="GO:0005770">
    <property type="term" value="C:late endosome"/>
    <property type="evidence" value="ECO:0000314"/>
    <property type="project" value="TAIR"/>
</dbReference>
<dbReference type="GO" id="GO:0005886">
    <property type="term" value="C:plasma membrane"/>
    <property type="evidence" value="ECO:0000314"/>
    <property type="project" value="TAIR"/>
</dbReference>
<dbReference type="GO" id="GO:0070676">
    <property type="term" value="P:intralumenal vesicle formation"/>
    <property type="evidence" value="ECO:0000314"/>
    <property type="project" value="TAIR"/>
</dbReference>
<dbReference type="GO" id="GO:0015031">
    <property type="term" value="P:protein transport"/>
    <property type="evidence" value="ECO:0007669"/>
    <property type="project" value="UniProtKB-KW"/>
</dbReference>
<dbReference type="GO" id="GO:0007034">
    <property type="term" value="P:vacuolar transport"/>
    <property type="evidence" value="ECO:0007669"/>
    <property type="project" value="InterPro"/>
</dbReference>
<dbReference type="Gene3D" id="1.10.287.1060">
    <property type="entry name" value="ESAT-6-like"/>
    <property type="match status" value="1"/>
</dbReference>
<dbReference type="InterPro" id="IPR005024">
    <property type="entry name" value="Snf7_fam"/>
</dbReference>
<dbReference type="PANTHER" id="PTHR22761">
    <property type="entry name" value="CHARGED MULTIVESICULAR BODY PROTEIN"/>
    <property type="match status" value="1"/>
</dbReference>
<dbReference type="PANTHER" id="PTHR22761:SF5">
    <property type="entry name" value="CHARGED MULTIVESICULAR BODY PROTEIN 6"/>
    <property type="match status" value="1"/>
</dbReference>
<dbReference type="Pfam" id="PF03357">
    <property type="entry name" value="Snf7"/>
    <property type="match status" value="1"/>
</dbReference>
<reference key="1">
    <citation type="journal article" date="2000" name="Nature">
        <title>Sequence and analysis of chromosome 5 of the plant Arabidopsis thaliana.</title>
        <authorList>
            <person name="Tabata S."/>
            <person name="Kaneko T."/>
            <person name="Nakamura Y."/>
            <person name="Kotani H."/>
            <person name="Kato T."/>
            <person name="Asamizu E."/>
            <person name="Miyajima N."/>
            <person name="Sasamoto S."/>
            <person name="Kimura T."/>
            <person name="Hosouchi T."/>
            <person name="Kawashima K."/>
            <person name="Kohara M."/>
            <person name="Matsumoto M."/>
            <person name="Matsuno A."/>
            <person name="Muraki A."/>
            <person name="Nakayama S."/>
            <person name="Nakazaki N."/>
            <person name="Naruo K."/>
            <person name="Okumura S."/>
            <person name="Shinpo S."/>
            <person name="Takeuchi C."/>
            <person name="Wada T."/>
            <person name="Watanabe A."/>
            <person name="Yamada M."/>
            <person name="Yasuda M."/>
            <person name="Sato S."/>
            <person name="de la Bastide M."/>
            <person name="Huang E."/>
            <person name="Spiegel L."/>
            <person name="Gnoj L."/>
            <person name="O'Shaughnessy A."/>
            <person name="Preston R."/>
            <person name="Habermann K."/>
            <person name="Murray J."/>
            <person name="Johnson D."/>
            <person name="Rohlfing T."/>
            <person name="Nelson J."/>
            <person name="Stoneking T."/>
            <person name="Pepin K."/>
            <person name="Spieth J."/>
            <person name="Sekhon M."/>
            <person name="Armstrong J."/>
            <person name="Becker M."/>
            <person name="Belter E."/>
            <person name="Cordum H."/>
            <person name="Cordes M."/>
            <person name="Courtney L."/>
            <person name="Courtney W."/>
            <person name="Dante M."/>
            <person name="Du H."/>
            <person name="Edwards J."/>
            <person name="Fryman J."/>
            <person name="Haakensen B."/>
            <person name="Lamar E."/>
            <person name="Latreille P."/>
            <person name="Leonard S."/>
            <person name="Meyer R."/>
            <person name="Mulvaney E."/>
            <person name="Ozersky P."/>
            <person name="Riley A."/>
            <person name="Strowmatt C."/>
            <person name="Wagner-McPherson C."/>
            <person name="Wollam A."/>
            <person name="Yoakum M."/>
            <person name="Bell M."/>
            <person name="Dedhia N."/>
            <person name="Parnell L."/>
            <person name="Shah R."/>
            <person name="Rodriguez M."/>
            <person name="Hoon See L."/>
            <person name="Vil D."/>
            <person name="Baker J."/>
            <person name="Kirchoff K."/>
            <person name="Toth K."/>
            <person name="King L."/>
            <person name="Bahret A."/>
            <person name="Miller B."/>
            <person name="Marra M.A."/>
            <person name="Martienssen R."/>
            <person name="McCombie W.R."/>
            <person name="Wilson R.K."/>
            <person name="Murphy G."/>
            <person name="Bancroft I."/>
            <person name="Volckaert G."/>
            <person name="Wambutt R."/>
            <person name="Duesterhoeft A."/>
            <person name="Stiekema W."/>
            <person name="Pohl T."/>
            <person name="Entian K.-D."/>
            <person name="Terryn N."/>
            <person name="Hartley N."/>
            <person name="Bent E."/>
            <person name="Johnson S."/>
            <person name="Langham S.-A."/>
            <person name="McCullagh B."/>
            <person name="Robben J."/>
            <person name="Grymonprez B."/>
            <person name="Zimmermann W."/>
            <person name="Ramsperger U."/>
            <person name="Wedler H."/>
            <person name="Balke K."/>
            <person name="Wedler E."/>
            <person name="Peters S."/>
            <person name="van Staveren M."/>
            <person name="Dirkse W."/>
            <person name="Mooijman P."/>
            <person name="Klein Lankhorst R."/>
            <person name="Weitzenegger T."/>
            <person name="Bothe G."/>
            <person name="Rose M."/>
            <person name="Hauf J."/>
            <person name="Berneiser S."/>
            <person name="Hempel S."/>
            <person name="Feldpausch M."/>
            <person name="Lamberth S."/>
            <person name="Villarroel R."/>
            <person name="Gielen J."/>
            <person name="Ardiles W."/>
            <person name="Bents O."/>
            <person name="Lemcke K."/>
            <person name="Kolesov G."/>
            <person name="Mayer K.F.X."/>
            <person name="Rudd S."/>
            <person name="Schoof H."/>
            <person name="Schueller C."/>
            <person name="Zaccaria P."/>
            <person name="Mewes H.-W."/>
            <person name="Bevan M."/>
            <person name="Fransz P.F."/>
        </authorList>
    </citation>
    <scope>NUCLEOTIDE SEQUENCE [LARGE SCALE GENOMIC DNA]</scope>
    <source>
        <strain>cv. Columbia</strain>
    </source>
</reference>
<reference key="2">
    <citation type="journal article" date="2017" name="Plant J.">
        <title>Araport11: a complete reannotation of the Arabidopsis thaliana reference genome.</title>
        <authorList>
            <person name="Cheng C.Y."/>
            <person name="Krishnakumar V."/>
            <person name="Chan A.P."/>
            <person name="Thibaud-Nissen F."/>
            <person name="Schobel S."/>
            <person name="Town C.D."/>
        </authorList>
    </citation>
    <scope>GENOME REANNOTATION</scope>
    <source>
        <strain>cv. Columbia</strain>
    </source>
</reference>
<reference key="3">
    <citation type="journal article" date="2003" name="Science">
        <title>Empirical analysis of transcriptional activity in the Arabidopsis genome.</title>
        <authorList>
            <person name="Yamada K."/>
            <person name="Lim J."/>
            <person name="Dale J.M."/>
            <person name="Chen H."/>
            <person name="Shinn P."/>
            <person name="Palm C.J."/>
            <person name="Southwick A.M."/>
            <person name="Wu H.C."/>
            <person name="Kim C.J."/>
            <person name="Nguyen M."/>
            <person name="Pham P.K."/>
            <person name="Cheuk R.F."/>
            <person name="Karlin-Newmann G."/>
            <person name="Liu S.X."/>
            <person name="Lam B."/>
            <person name="Sakano H."/>
            <person name="Wu T."/>
            <person name="Yu G."/>
            <person name="Miranda M."/>
            <person name="Quach H.L."/>
            <person name="Tripp M."/>
            <person name="Chang C.H."/>
            <person name="Lee J.M."/>
            <person name="Toriumi M.J."/>
            <person name="Chan M.M."/>
            <person name="Tang C.C."/>
            <person name="Onodera C.S."/>
            <person name="Deng J.M."/>
            <person name="Akiyama K."/>
            <person name="Ansari Y."/>
            <person name="Arakawa T."/>
            <person name="Banh J."/>
            <person name="Banno F."/>
            <person name="Bowser L."/>
            <person name="Brooks S.Y."/>
            <person name="Carninci P."/>
            <person name="Chao Q."/>
            <person name="Choy N."/>
            <person name="Enju A."/>
            <person name="Goldsmith A.D."/>
            <person name="Gurjal M."/>
            <person name="Hansen N.F."/>
            <person name="Hayashizaki Y."/>
            <person name="Johnson-Hopson C."/>
            <person name="Hsuan V.W."/>
            <person name="Iida K."/>
            <person name="Karnes M."/>
            <person name="Khan S."/>
            <person name="Koesema E."/>
            <person name="Ishida J."/>
            <person name="Jiang P.X."/>
            <person name="Jones T."/>
            <person name="Kawai J."/>
            <person name="Kamiya A."/>
            <person name="Meyers C."/>
            <person name="Nakajima M."/>
            <person name="Narusaka M."/>
            <person name="Seki M."/>
            <person name="Sakurai T."/>
            <person name="Satou M."/>
            <person name="Tamse R."/>
            <person name="Vaysberg M."/>
            <person name="Wallender E.K."/>
            <person name="Wong C."/>
            <person name="Yamamura Y."/>
            <person name="Yuan S."/>
            <person name="Shinozaki K."/>
            <person name="Davis R.W."/>
            <person name="Theologis A."/>
            <person name="Ecker J.R."/>
        </authorList>
    </citation>
    <scope>NUCLEOTIDE SEQUENCE [LARGE SCALE MRNA]</scope>
    <source>
        <strain>cv. Columbia</strain>
    </source>
</reference>
<reference key="4">
    <citation type="submission" date="2004-09" db="EMBL/GenBank/DDBJ databases">
        <title>Large-scale analysis of RIKEN Arabidopsis full-length (RAFL) cDNAs.</title>
        <authorList>
            <person name="Totoki Y."/>
            <person name="Seki M."/>
            <person name="Ishida J."/>
            <person name="Nakajima M."/>
            <person name="Enju A."/>
            <person name="Kamiya A."/>
            <person name="Narusaka M."/>
            <person name="Shin-i T."/>
            <person name="Nakagawa M."/>
            <person name="Sakamoto N."/>
            <person name="Oishi K."/>
            <person name="Kohara Y."/>
            <person name="Kobayashi M."/>
            <person name="Toyoda A."/>
            <person name="Sakaki Y."/>
            <person name="Sakurai T."/>
            <person name="Iida K."/>
            <person name="Akiyama K."/>
            <person name="Satou M."/>
            <person name="Toyoda T."/>
            <person name="Konagaya A."/>
            <person name="Carninci P."/>
            <person name="Kawai J."/>
            <person name="Hayashizaki Y."/>
            <person name="Shinozaki K."/>
        </authorList>
    </citation>
    <scope>NUCLEOTIDE SEQUENCE [LARGE SCALE MRNA]</scope>
    <source>
        <strain>cv. Columbia</strain>
    </source>
</reference>
<reference key="5">
    <citation type="journal article" date="2006" name="Development">
        <title>The Arabidopsis elch mutant reveals functions of an ESCRT component in cytokinesis.</title>
        <authorList>
            <person name="Spitzer C."/>
            <person name="Schellmann S."/>
            <person name="Sabovljevic A."/>
            <person name="Shahriari M."/>
            <person name="Keshavaiah C."/>
            <person name="Bechtold N."/>
            <person name="Herzog M."/>
            <person name="Mueller S."/>
            <person name="Hanisch F.-G."/>
            <person name="Huelskamp M."/>
        </authorList>
    </citation>
    <scope>IDENTIFICATION</scope>
    <scope>NOMENCLATURE</scope>
</reference>
<reference key="6">
    <citation type="journal article" date="2006" name="Trends Plant Sci.">
        <title>Exploring the ESCRTing machinery in eukaryotes.</title>
        <authorList>
            <person name="Winter V."/>
            <person name="Hauser M.-T."/>
        </authorList>
    </citation>
    <scope>IDENTIFICATION</scope>
</reference>
<reference key="7">
    <citation type="journal article" date="2010" name="Plant J.">
        <title>The AAA-type ATPase AtSKD1 contributes to vacuolar maintenance of Arabidopsis thaliana.</title>
        <authorList>
            <person name="Shahriari M."/>
            <person name="Keshavaiah C."/>
            <person name="Scheuring D."/>
            <person name="Sabovljevic A."/>
            <person name="Pimpl P."/>
            <person name="Haeusler R.E."/>
            <person name="Huelskamp M."/>
            <person name="Schellmann S."/>
        </authorList>
    </citation>
    <scope>INTERACTION WITH SKD1</scope>
    <source>
        <strain>cv. Columbia</strain>
    </source>
</reference>
<feature type="initiator methionine" description="Removed" evidence="3">
    <location>
        <position position="1"/>
    </location>
</feature>
<feature type="chain" id="PRO_0000368203" description="Vacuolar protein sorting-associated protein 20 homolog 2">
    <location>
        <begin position="2"/>
        <end position="216"/>
    </location>
</feature>
<feature type="region of interest" description="Disordered" evidence="4">
    <location>
        <begin position="173"/>
        <end position="216"/>
    </location>
</feature>
<feature type="coiled-coil region" evidence="3">
    <location>
        <begin position="16"/>
        <end position="90"/>
    </location>
</feature>
<feature type="lipid moiety-binding region" description="N-myristoyl glycine" evidence="3">
    <location>
        <position position="2"/>
    </location>
</feature>
<organism>
    <name type="scientific">Arabidopsis thaliana</name>
    <name type="common">Mouse-ear cress</name>
    <dbReference type="NCBI Taxonomy" id="3702"/>
    <lineage>
        <taxon>Eukaryota</taxon>
        <taxon>Viridiplantae</taxon>
        <taxon>Streptophyta</taxon>
        <taxon>Embryophyta</taxon>
        <taxon>Tracheophyta</taxon>
        <taxon>Spermatophyta</taxon>
        <taxon>Magnoliopsida</taxon>
        <taxon>eudicotyledons</taxon>
        <taxon>Gunneridae</taxon>
        <taxon>Pentapetalae</taxon>
        <taxon>rosids</taxon>
        <taxon>malvids</taxon>
        <taxon>Brassicales</taxon>
        <taxon>Brassicaceae</taxon>
        <taxon>Camelineae</taxon>
        <taxon>Arabidopsis</taxon>
    </lineage>
</organism>
<name>VP202_ARATH</name>
<protein>
    <recommendedName>
        <fullName>Vacuolar protein sorting-associated protein 20 homolog 2</fullName>
        <shortName>AtVPS20-2</shortName>
    </recommendedName>
    <alternativeName>
        <fullName>Charged multivesicular body protein 6 homolog 2</fullName>
    </alternativeName>
    <alternativeName>
        <fullName>ESCRT-III complex subunit VPS20 homolog 2</fullName>
    </alternativeName>
</protein>
<proteinExistence type="evidence at protein level"/>
<keyword id="KW-0175">Coiled coil</keyword>
<keyword id="KW-0967">Endosome</keyword>
<keyword id="KW-0449">Lipoprotein</keyword>
<keyword id="KW-0472">Membrane</keyword>
<keyword id="KW-0519">Myristate</keyword>
<keyword id="KW-0653">Protein transport</keyword>
<keyword id="KW-1185">Reference proteome</keyword>
<keyword id="KW-0813">Transport</keyword>
<accession>Q9FY89</accession>
<comment type="function">
    <text evidence="1">Component of the ESCRT-III complex, which is required for multivesicular bodies (MVBs) formation and sorting of endosomal cargo proteins into MVBs. The ESCRT-III complex is probably involved in the concentration of MVB cargo (By similarity).</text>
</comment>
<comment type="subunit">
    <text evidence="2 5">Component of the endosomal sorting required for transport complex III (ESCRT-III), composed at least of VPS2, VPS20, VPS24 and VPS32 (By similarity). Interacts with SKD1 (PubMed:20663085).</text>
</comment>
<comment type="interaction">
    <interactant intactId="EBI-3865360">
        <id>Q9FY89</id>
    </interactant>
    <interactant intactId="EBI-3865286">
        <id>Q8GXN6</id>
        <label>VPS20.1</label>
    </interactant>
    <organismsDiffer>false</organismsDiffer>
    <experiments>4</experiments>
</comment>
<comment type="interaction">
    <interactant intactId="EBI-3865360">
        <id>Q9FY89</id>
    </interactant>
    <interactant intactId="EBI-3865350">
        <id>Q8VZC9</id>
        <label>VPS25</label>
    </interactant>
    <organismsDiffer>false</organismsDiffer>
    <experiments>7</experiments>
</comment>
<comment type="interaction">
    <interactant intactId="EBI-3865360">
        <id>Q9FY89</id>
    </interactant>
    <interactant intactId="EBI-3865938">
        <id>O82197</id>
        <label>VPS32.1</label>
    </interactant>
    <organismsDiffer>false</organismsDiffer>
    <experiments>3</experiments>
</comment>
<comment type="interaction">
    <interactant intactId="EBI-3865360">
        <id>Q9FY89</id>
    </interactant>
    <interactant intactId="EBI-3865953">
        <id>Q9SZE4</id>
        <label>VPS32.2</label>
    </interactant>
    <organismsDiffer>false</organismsDiffer>
    <experiments>3</experiments>
</comment>
<comment type="interaction">
    <interactant intactId="EBI-3865360">
        <id>Q9FY89</id>
    </interactant>
    <interactant intactId="EBI-3865302">
        <id>Q9FF81</id>
        <label>VPS36</label>
    </interactant>
    <organismsDiffer>false</organismsDiffer>
    <experiments>5</experiments>
</comment>
<comment type="subcellular location">
    <subcellularLocation>
        <location evidence="1">Endosome membrane</location>
        <topology evidence="1">Lipid-anchor</topology>
    </subcellularLocation>
</comment>
<comment type="similarity">
    <text evidence="6">Belongs to the SNF7 family.</text>
</comment>
<sequence>MGNLFVKKPKITEVDRAILSLKTQRRKLGQYQQQLEKVIEAEKQAARDLIREKRKDRALLALKKKRTQEELLKQVDQWLINVEQQLADIELTSKQKAVFESLKQGNNAIKAIQSEVNLDDVQKLMDDTAEAKAYQDELSAILGEKLSAEDEEEILAEFDNLESLLIVEDMPEVPTTELMPEEPEKMDLPDVPTKAPVASNETTSTKRKVLEEPLEA</sequence>